<keyword id="KW-0001">2Fe-2S</keyword>
<keyword id="KW-0028">Amino-acid biosynthesis</keyword>
<keyword id="KW-0100">Branched-chain amino acid biosynthesis</keyword>
<keyword id="KW-0408">Iron</keyword>
<keyword id="KW-0411">Iron-sulfur</keyword>
<keyword id="KW-0456">Lyase</keyword>
<keyword id="KW-0460">Magnesium</keyword>
<keyword id="KW-0479">Metal-binding</keyword>
<evidence type="ECO:0000255" key="1">
    <source>
        <dbReference type="HAMAP-Rule" id="MF_00012"/>
    </source>
</evidence>
<protein>
    <recommendedName>
        <fullName evidence="1">Dihydroxy-acid dehydratase</fullName>
        <shortName evidence="1">DAD</shortName>
        <ecNumber evidence="1">4.2.1.9</ecNumber>
    </recommendedName>
</protein>
<organism>
    <name type="scientific">Streptococcus pneumoniae (strain ATCC 700669 / Spain 23F-1)</name>
    <dbReference type="NCBI Taxonomy" id="561276"/>
    <lineage>
        <taxon>Bacteria</taxon>
        <taxon>Bacillati</taxon>
        <taxon>Bacillota</taxon>
        <taxon>Bacilli</taxon>
        <taxon>Lactobacillales</taxon>
        <taxon>Streptococcaceae</taxon>
        <taxon>Streptococcus</taxon>
    </lineage>
</organism>
<gene>
    <name evidence="1" type="primary">ilvD</name>
    <name type="ordered locus">SPN23F21580</name>
</gene>
<feature type="chain" id="PRO_1000116529" description="Dihydroxy-acid dehydratase">
    <location>
        <begin position="1"/>
        <end position="567"/>
    </location>
</feature>
<feature type="active site" description="Proton acceptor" evidence="1">
    <location>
        <position position="474"/>
    </location>
</feature>
<feature type="binding site" evidence="1">
    <location>
        <position position="52"/>
    </location>
    <ligand>
        <name>[2Fe-2S] cluster</name>
        <dbReference type="ChEBI" id="CHEBI:190135"/>
    </ligand>
</feature>
<feature type="binding site" evidence="1">
    <location>
        <position position="84"/>
    </location>
    <ligand>
        <name>Mg(2+)</name>
        <dbReference type="ChEBI" id="CHEBI:18420"/>
    </ligand>
</feature>
<feature type="binding site" evidence="1">
    <location>
        <position position="125"/>
    </location>
    <ligand>
        <name>[2Fe-2S] cluster</name>
        <dbReference type="ChEBI" id="CHEBI:190135"/>
    </ligand>
</feature>
<feature type="binding site" evidence="1">
    <location>
        <position position="126"/>
    </location>
    <ligand>
        <name>Mg(2+)</name>
        <dbReference type="ChEBI" id="CHEBI:18420"/>
    </ligand>
</feature>
<feature type="binding site" description="via carbamate group" evidence="1">
    <location>
        <position position="127"/>
    </location>
    <ligand>
        <name>Mg(2+)</name>
        <dbReference type="ChEBI" id="CHEBI:18420"/>
    </ligand>
</feature>
<feature type="binding site" evidence="1">
    <location>
        <position position="197"/>
    </location>
    <ligand>
        <name>[2Fe-2S] cluster</name>
        <dbReference type="ChEBI" id="CHEBI:190135"/>
    </ligand>
</feature>
<feature type="binding site" evidence="1">
    <location>
        <position position="448"/>
    </location>
    <ligand>
        <name>Mg(2+)</name>
        <dbReference type="ChEBI" id="CHEBI:18420"/>
    </ligand>
</feature>
<feature type="modified residue" description="N6-carboxylysine" evidence="1">
    <location>
        <position position="127"/>
    </location>
</feature>
<accession>B8ZPQ2</accession>
<proteinExistence type="inferred from homology"/>
<dbReference type="EC" id="4.2.1.9" evidence="1"/>
<dbReference type="EMBL" id="FM211187">
    <property type="protein sequence ID" value="CAR69893.1"/>
    <property type="molecule type" value="Genomic_DNA"/>
</dbReference>
<dbReference type="RefSeq" id="WP_000137358.1">
    <property type="nucleotide sequence ID" value="NC_011900.1"/>
</dbReference>
<dbReference type="SMR" id="B8ZPQ2"/>
<dbReference type="KEGG" id="sne:SPN23F21580"/>
<dbReference type="HOGENOM" id="CLU_014271_4_2_9"/>
<dbReference type="UniPathway" id="UPA00047">
    <property type="reaction ID" value="UER00057"/>
</dbReference>
<dbReference type="UniPathway" id="UPA00049">
    <property type="reaction ID" value="UER00061"/>
</dbReference>
<dbReference type="GO" id="GO:0051537">
    <property type="term" value="F:2 iron, 2 sulfur cluster binding"/>
    <property type="evidence" value="ECO:0007669"/>
    <property type="project" value="UniProtKB-UniRule"/>
</dbReference>
<dbReference type="GO" id="GO:0004160">
    <property type="term" value="F:dihydroxy-acid dehydratase activity"/>
    <property type="evidence" value="ECO:0007669"/>
    <property type="project" value="UniProtKB-UniRule"/>
</dbReference>
<dbReference type="GO" id="GO:0000287">
    <property type="term" value="F:magnesium ion binding"/>
    <property type="evidence" value="ECO:0007669"/>
    <property type="project" value="UniProtKB-UniRule"/>
</dbReference>
<dbReference type="GO" id="GO:0009097">
    <property type="term" value="P:isoleucine biosynthetic process"/>
    <property type="evidence" value="ECO:0007669"/>
    <property type="project" value="UniProtKB-UniRule"/>
</dbReference>
<dbReference type="GO" id="GO:0009099">
    <property type="term" value="P:L-valine biosynthetic process"/>
    <property type="evidence" value="ECO:0007669"/>
    <property type="project" value="UniProtKB-UniRule"/>
</dbReference>
<dbReference type="FunFam" id="3.50.30.80:FF:000001">
    <property type="entry name" value="Dihydroxy-acid dehydratase"/>
    <property type="match status" value="1"/>
</dbReference>
<dbReference type="Gene3D" id="3.50.30.80">
    <property type="entry name" value="IlvD/EDD C-terminal domain-like"/>
    <property type="match status" value="1"/>
</dbReference>
<dbReference type="HAMAP" id="MF_00012">
    <property type="entry name" value="IlvD"/>
    <property type="match status" value="1"/>
</dbReference>
<dbReference type="InterPro" id="IPR050165">
    <property type="entry name" value="DHAD_IlvD/Edd"/>
</dbReference>
<dbReference type="InterPro" id="IPR042096">
    <property type="entry name" value="Dihydro-acid_dehy_C"/>
</dbReference>
<dbReference type="InterPro" id="IPR004404">
    <property type="entry name" value="DihydroxyA_deHydtase"/>
</dbReference>
<dbReference type="InterPro" id="IPR020558">
    <property type="entry name" value="DiOHA_6PGluconate_deHydtase_CS"/>
</dbReference>
<dbReference type="InterPro" id="IPR056740">
    <property type="entry name" value="ILV_EDD_C"/>
</dbReference>
<dbReference type="InterPro" id="IPR000581">
    <property type="entry name" value="ILV_EDD_N"/>
</dbReference>
<dbReference type="InterPro" id="IPR037237">
    <property type="entry name" value="IlvD/EDD_N"/>
</dbReference>
<dbReference type="NCBIfam" id="TIGR00110">
    <property type="entry name" value="ilvD"/>
    <property type="match status" value="1"/>
</dbReference>
<dbReference type="NCBIfam" id="NF002068">
    <property type="entry name" value="PRK00911.1"/>
    <property type="match status" value="1"/>
</dbReference>
<dbReference type="PANTHER" id="PTHR21000">
    <property type="entry name" value="DIHYDROXY-ACID DEHYDRATASE DAD"/>
    <property type="match status" value="1"/>
</dbReference>
<dbReference type="PANTHER" id="PTHR21000:SF5">
    <property type="entry name" value="DIHYDROXY-ACID DEHYDRATASE, MITOCHONDRIAL"/>
    <property type="match status" value="1"/>
</dbReference>
<dbReference type="Pfam" id="PF24877">
    <property type="entry name" value="ILV_EDD_C"/>
    <property type="match status" value="1"/>
</dbReference>
<dbReference type="Pfam" id="PF00920">
    <property type="entry name" value="ILVD_EDD_N"/>
    <property type="match status" value="1"/>
</dbReference>
<dbReference type="SUPFAM" id="SSF143975">
    <property type="entry name" value="IlvD/EDD N-terminal domain-like"/>
    <property type="match status" value="1"/>
</dbReference>
<dbReference type="SUPFAM" id="SSF52016">
    <property type="entry name" value="LeuD/IlvD-like"/>
    <property type="match status" value="1"/>
</dbReference>
<dbReference type="PROSITE" id="PS00886">
    <property type="entry name" value="ILVD_EDD_1"/>
    <property type="match status" value="1"/>
</dbReference>
<dbReference type="PROSITE" id="PS00887">
    <property type="entry name" value="ILVD_EDD_2"/>
    <property type="match status" value="1"/>
</dbReference>
<comment type="function">
    <text evidence="1">Functions in the biosynthesis of branched-chain amino acids. Catalyzes the dehydration of (2R,3R)-2,3-dihydroxy-3-methylpentanoate (2,3-dihydroxy-3-methylvalerate) into 2-oxo-3-methylpentanoate (2-oxo-3-methylvalerate) and of (2R)-2,3-dihydroxy-3-methylbutanoate (2,3-dihydroxyisovalerate) into 2-oxo-3-methylbutanoate (2-oxoisovalerate), the penultimate precursor to L-isoleucine and L-valine, respectively.</text>
</comment>
<comment type="catalytic activity">
    <reaction evidence="1">
        <text>(2R)-2,3-dihydroxy-3-methylbutanoate = 3-methyl-2-oxobutanoate + H2O</text>
        <dbReference type="Rhea" id="RHEA:24809"/>
        <dbReference type="ChEBI" id="CHEBI:11851"/>
        <dbReference type="ChEBI" id="CHEBI:15377"/>
        <dbReference type="ChEBI" id="CHEBI:49072"/>
        <dbReference type="EC" id="4.2.1.9"/>
    </reaction>
    <physiologicalReaction direction="left-to-right" evidence="1">
        <dbReference type="Rhea" id="RHEA:24810"/>
    </physiologicalReaction>
</comment>
<comment type="catalytic activity">
    <reaction evidence="1">
        <text>(2R,3R)-2,3-dihydroxy-3-methylpentanoate = (S)-3-methyl-2-oxopentanoate + H2O</text>
        <dbReference type="Rhea" id="RHEA:27694"/>
        <dbReference type="ChEBI" id="CHEBI:15377"/>
        <dbReference type="ChEBI" id="CHEBI:35146"/>
        <dbReference type="ChEBI" id="CHEBI:49258"/>
        <dbReference type="EC" id="4.2.1.9"/>
    </reaction>
    <physiologicalReaction direction="left-to-right" evidence="1">
        <dbReference type="Rhea" id="RHEA:27695"/>
    </physiologicalReaction>
</comment>
<comment type="cofactor">
    <cofactor evidence="1">
        <name>[2Fe-2S] cluster</name>
        <dbReference type="ChEBI" id="CHEBI:190135"/>
    </cofactor>
    <text evidence="1">Binds 1 [2Fe-2S] cluster per subunit. This cluster acts as a Lewis acid cofactor.</text>
</comment>
<comment type="cofactor">
    <cofactor evidence="1">
        <name>Mg(2+)</name>
        <dbReference type="ChEBI" id="CHEBI:18420"/>
    </cofactor>
</comment>
<comment type="pathway">
    <text evidence="1">Amino-acid biosynthesis; L-isoleucine biosynthesis; L-isoleucine from 2-oxobutanoate: step 3/4.</text>
</comment>
<comment type="pathway">
    <text evidence="1">Amino-acid biosynthesis; L-valine biosynthesis; L-valine from pyruvate: step 3/4.</text>
</comment>
<comment type="subunit">
    <text evidence="1">Homodimer.</text>
</comment>
<comment type="similarity">
    <text evidence="1">Belongs to the IlvD/Edd family.</text>
</comment>
<sequence>MTELDKRHRSSIYDSMVKSPNRAMLRATGMTDKDFETSIVGVISTWAENTPCNIHLHDFGKLAKEGVKSAGAWPVQFGTITVADGIAMGTPGMRFSLTSRDIIADSIEAAMSGHNVDAFVAIGGCDKNMPGSMIAIANMDIPAIFAYGGTIAPGNLDGKDIDLVSVFEGIGKWNHGDMTAEDVKRLECNACPGPGGCGGMYTANTMATAIEVLGMSLPGSSSHPAESADKKEDIEAAGRAVVKMLELGLKPSDILTREAFEDAITVTMALGGSTNATLHLLAIAHAANVDLSLEDFNTIQERVPHLADLKPSGQYVFQDLYEVGGVPAVMKYLLANGFLHGDRITCTGKTVAENLADFADLTPGQKVIMPLENPKRADGPLIILNGNLAPDGAVAKVSGVKVRRHVGPAKVFDSEEDAIQAVLTDEIVDGDVVVVRFVGPKGGPGMPEMLSLSSMIVGKGQGDKVALLTDGRFSGGTYGLVVGHIAPEAQDGGPIAYLRTGDIVTVDQDTKEISMAVSEEELEKRKAETTLPPLYSRGVLGKYAHIVSSASRGAVTDFWNMDKSGKK</sequence>
<reference key="1">
    <citation type="journal article" date="2009" name="J. Bacteriol.">
        <title>Role of conjugative elements in the evolution of the multidrug-resistant pandemic clone Streptococcus pneumoniae Spain23F ST81.</title>
        <authorList>
            <person name="Croucher N.J."/>
            <person name="Walker D."/>
            <person name="Romero P."/>
            <person name="Lennard N."/>
            <person name="Paterson G.K."/>
            <person name="Bason N.C."/>
            <person name="Mitchell A.M."/>
            <person name="Quail M.A."/>
            <person name="Andrew P.W."/>
            <person name="Parkhill J."/>
            <person name="Bentley S.D."/>
            <person name="Mitchell T.J."/>
        </authorList>
    </citation>
    <scope>NUCLEOTIDE SEQUENCE [LARGE SCALE GENOMIC DNA]</scope>
    <source>
        <strain>ATCC 700669 / Spain 23F-1</strain>
    </source>
</reference>
<name>ILVD_STRPJ</name>